<sequence>MIGIIGAMEEEVTILKNKLTQLSEISVAHVKFYTGILKDREVVITQSGIGKVNAAISTTLLINKFKPDVIINTGSAGALDESLNVGDVLISDDVKYHDADATAFGYEYGQIPQMPVAFQSSKPLIEKVSQVVQQQQLTAKVGLIVSGDSFIGSVEQRQKIKKAFPNAMAVEMEATAIAQTCYQFNVPFVVVRAVSDLANGEAEMSFEAFLEKAAVSSSQTVEALVSQL</sequence>
<proteinExistence type="inferred from homology"/>
<keyword id="KW-0028">Amino-acid biosynthesis</keyword>
<keyword id="KW-0378">Hydrolase</keyword>
<keyword id="KW-0486">Methionine biosynthesis</keyword>
<feature type="chain" id="PRO_0000359370" description="5'-methylthioadenosine/S-adenosylhomocysteine nucleosidase">
    <location>
        <begin position="1"/>
        <end position="228"/>
    </location>
</feature>
<feature type="active site" description="Proton acceptor" evidence="1">
    <location>
        <position position="11"/>
    </location>
</feature>
<feature type="active site" description="Proton donor" evidence="1">
    <location>
        <position position="196"/>
    </location>
</feature>
<feature type="binding site" evidence="1">
    <location>
        <position position="77"/>
    </location>
    <ligand>
        <name>substrate</name>
    </ligand>
</feature>
<feature type="binding site" evidence="1">
    <location>
        <position position="151"/>
    </location>
    <ligand>
        <name>substrate</name>
    </ligand>
</feature>
<feature type="binding site" evidence="1">
    <location>
        <begin position="172"/>
        <end position="173"/>
    </location>
    <ligand>
        <name>substrate</name>
    </ligand>
</feature>
<evidence type="ECO:0000255" key="1">
    <source>
        <dbReference type="HAMAP-Rule" id="MF_01684"/>
    </source>
</evidence>
<reference key="1">
    <citation type="journal article" date="2002" name="Lancet">
        <title>Genome and virulence determinants of high virulence community-acquired MRSA.</title>
        <authorList>
            <person name="Baba T."/>
            <person name="Takeuchi F."/>
            <person name="Kuroda M."/>
            <person name="Yuzawa H."/>
            <person name="Aoki K."/>
            <person name="Oguchi A."/>
            <person name="Nagai Y."/>
            <person name="Iwama N."/>
            <person name="Asano K."/>
            <person name="Naimi T."/>
            <person name="Kuroda H."/>
            <person name="Cui L."/>
            <person name="Yamamoto K."/>
            <person name="Hiramatsu K."/>
        </authorList>
    </citation>
    <scope>NUCLEOTIDE SEQUENCE [LARGE SCALE GENOMIC DNA]</scope>
    <source>
        <strain>MW2</strain>
    </source>
</reference>
<dbReference type="EC" id="3.2.2.9" evidence="1"/>
<dbReference type="EMBL" id="BA000033">
    <property type="protein sequence ID" value="BAB95415.1"/>
    <property type="molecule type" value="Genomic_DNA"/>
</dbReference>
<dbReference type="RefSeq" id="WP_000579275.1">
    <property type="nucleotide sequence ID" value="NC_003923.1"/>
</dbReference>
<dbReference type="SMR" id="Q7A0R5"/>
<dbReference type="KEGG" id="sam:MW1550"/>
<dbReference type="HOGENOM" id="CLU_031248_2_2_9"/>
<dbReference type="UniPathway" id="UPA00904">
    <property type="reaction ID" value="UER00871"/>
</dbReference>
<dbReference type="GO" id="GO:0005829">
    <property type="term" value="C:cytosol"/>
    <property type="evidence" value="ECO:0007669"/>
    <property type="project" value="TreeGrafter"/>
</dbReference>
<dbReference type="GO" id="GO:0008782">
    <property type="term" value="F:adenosylhomocysteine nucleosidase activity"/>
    <property type="evidence" value="ECO:0007669"/>
    <property type="project" value="UniProtKB-UniRule"/>
</dbReference>
<dbReference type="GO" id="GO:0008930">
    <property type="term" value="F:methylthioadenosine nucleosidase activity"/>
    <property type="evidence" value="ECO:0007669"/>
    <property type="project" value="UniProtKB-UniRule"/>
</dbReference>
<dbReference type="GO" id="GO:0019509">
    <property type="term" value="P:L-methionine salvage from methylthioadenosine"/>
    <property type="evidence" value="ECO:0007669"/>
    <property type="project" value="UniProtKB-UniRule"/>
</dbReference>
<dbReference type="GO" id="GO:0019284">
    <property type="term" value="P:L-methionine salvage from S-adenosylmethionine"/>
    <property type="evidence" value="ECO:0007669"/>
    <property type="project" value="TreeGrafter"/>
</dbReference>
<dbReference type="GO" id="GO:0009164">
    <property type="term" value="P:nucleoside catabolic process"/>
    <property type="evidence" value="ECO:0007669"/>
    <property type="project" value="InterPro"/>
</dbReference>
<dbReference type="CDD" id="cd09008">
    <property type="entry name" value="MTAN"/>
    <property type="match status" value="1"/>
</dbReference>
<dbReference type="FunFam" id="3.40.50.1580:FF:000001">
    <property type="entry name" value="MTA/SAH nucleosidase family protein"/>
    <property type="match status" value="1"/>
</dbReference>
<dbReference type="Gene3D" id="3.40.50.1580">
    <property type="entry name" value="Nucleoside phosphorylase domain"/>
    <property type="match status" value="1"/>
</dbReference>
<dbReference type="HAMAP" id="MF_01684">
    <property type="entry name" value="Salvage_MtnN"/>
    <property type="match status" value="1"/>
</dbReference>
<dbReference type="InterPro" id="IPR010049">
    <property type="entry name" value="MTA_SAH_Nsdase"/>
</dbReference>
<dbReference type="InterPro" id="IPR000845">
    <property type="entry name" value="Nucleoside_phosphorylase_d"/>
</dbReference>
<dbReference type="InterPro" id="IPR035994">
    <property type="entry name" value="Nucleoside_phosphorylase_sf"/>
</dbReference>
<dbReference type="NCBIfam" id="TIGR01704">
    <property type="entry name" value="MTA_SAH-Nsdase"/>
    <property type="match status" value="1"/>
</dbReference>
<dbReference type="NCBIfam" id="NF004079">
    <property type="entry name" value="PRK05584.1"/>
    <property type="match status" value="1"/>
</dbReference>
<dbReference type="PANTHER" id="PTHR46832">
    <property type="entry name" value="5'-METHYLTHIOADENOSINE/S-ADENOSYLHOMOCYSTEINE NUCLEOSIDASE"/>
    <property type="match status" value="1"/>
</dbReference>
<dbReference type="PANTHER" id="PTHR46832:SF1">
    <property type="entry name" value="5'-METHYLTHIOADENOSINE_S-ADENOSYLHOMOCYSTEINE NUCLEOSIDASE"/>
    <property type="match status" value="1"/>
</dbReference>
<dbReference type="Pfam" id="PF01048">
    <property type="entry name" value="PNP_UDP_1"/>
    <property type="match status" value="1"/>
</dbReference>
<dbReference type="SUPFAM" id="SSF53167">
    <property type="entry name" value="Purine and uridine phosphorylases"/>
    <property type="match status" value="1"/>
</dbReference>
<protein>
    <recommendedName>
        <fullName evidence="1">5'-methylthioadenosine/S-adenosylhomocysteine nucleosidase</fullName>
        <shortName evidence="1">MTA/SAH nucleosidase</shortName>
        <shortName evidence="1">MTAN</shortName>
        <ecNumber evidence="1">3.2.2.9</ecNumber>
    </recommendedName>
    <alternativeName>
        <fullName evidence="1">5'-deoxyadenosine nucleosidase</fullName>
        <shortName evidence="1">DOA nucleosidase</shortName>
        <shortName evidence="1">dAdo nucleosidase</shortName>
    </alternativeName>
    <alternativeName>
        <fullName evidence="1">5'-methylthioadenosine nucleosidase</fullName>
        <shortName evidence="1">MTA nucleosidase</shortName>
    </alternativeName>
    <alternativeName>
        <fullName evidence="1">S-adenosylhomocysteine nucleosidase</fullName>
        <shortName evidence="1">AdoHcy nucleosidase</shortName>
        <shortName evidence="1">SAH nucleosidase</shortName>
        <shortName evidence="1">SRH nucleosidase</shortName>
    </alternativeName>
</protein>
<accession>Q7A0R5</accession>
<comment type="function">
    <text evidence="1">Catalyzes the irreversible cleavage of the glycosidic bond in both 5'-methylthioadenosine (MTA) and S-adenosylhomocysteine (SAH/AdoHcy) to adenine and the corresponding thioribose, 5'-methylthioribose and S-ribosylhomocysteine, respectively. Also cleaves 5'-deoxyadenosine, a toxic by-product of radical S-adenosylmethionine (SAM) enzymes, into 5-deoxyribose and adenine.</text>
</comment>
<comment type="catalytic activity">
    <reaction evidence="1">
        <text>S-adenosyl-L-homocysteine + H2O = S-(5-deoxy-D-ribos-5-yl)-L-homocysteine + adenine</text>
        <dbReference type="Rhea" id="RHEA:17805"/>
        <dbReference type="ChEBI" id="CHEBI:15377"/>
        <dbReference type="ChEBI" id="CHEBI:16708"/>
        <dbReference type="ChEBI" id="CHEBI:57856"/>
        <dbReference type="ChEBI" id="CHEBI:58195"/>
        <dbReference type="EC" id="3.2.2.9"/>
    </reaction>
</comment>
<comment type="catalytic activity">
    <reaction evidence="1">
        <text>S-methyl-5'-thioadenosine + H2O = 5-(methylsulfanyl)-D-ribose + adenine</text>
        <dbReference type="Rhea" id="RHEA:13617"/>
        <dbReference type="ChEBI" id="CHEBI:15377"/>
        <dbReference type="ChEBI" id="CHEBI:16708"/>
        <dbReference type="ChEBI" id="CHEBI:17509"/>
        <dbReference type="ChEBI" id="CHEBI:78440"/>
        <dbReference type="EC" id="3.2.2.9"/>
    </reaction>
</comment>
<comment type="catalytic activity">
    <reaction evidence="1">
        <text>5'-deoxyadenosine + H2O = 5-deoxy-D-ribose + adenine</text>
        <dbReference type="Rhea" id="RHEA:29859"/>
        <dbReference type="ChEBI" id="CHEBI:15377"/>
        <dbReference type="ChEBI" id="CHEBI:16708"/>
        <dbReference type="ChEBI" id="CHEBI:17319"/>
        <dbReference type="ChEBI" id="CHEBI:149540"/>
        <dbReference type="EC" id="3.2.2.9"/>
    </reaction>
    <physiologicalReaction direction="left-to-right" evidence="1">
        <dbReference type="Rhea" id="RHEA:29860"/>
    </physiologicalReaction>
</comment>
<comment type="pathway">
    <text evidence="1">Amino-acid biosynthesis; L-methionine biosynthesis via salvage pathway; S-methyl-5-thio-alpha-D-ribose 1-phosphate from S-methyl-5'-thioadenosine (hydrolase route): step 1/2.</text>
</comment>
<comment type="similarity">
    <text evidence="1">Belongs to the PNP/UDP phosphorylase family. MtnN subfamily.</text>
</comment>
<name>MTNN_STAAW</name>
<organism>
    <name type="scientific">Staphylococcus aureus (strain MW2)</name>
    <dbReference type="NCBI Taxonomy" id="196620"/>
    <lineage>
        <taxon>Bacteria</taxon>
        <taxon>Bacillati</taxon>
        <taxon>Bacillota</taxon>
        <taxon>Bacilli</taxon>
        <taxon>Bacillales</taxon>
        <taxon>Staphylococcaceae</taxon>
        <taxon>Staphylococcus</taxon>
    </lineage>
</organism>
<gene>
    <name evidence="1" type="primary">mtnN</name>
    <name type="ordered locus">MW1550</name>
</gene>